<reference key="1">
    <citation type="journal article" date="2005" name="Science">
        <title>The transcriptional landscape of the mammalian genome.</title>
        <authorList>
            <person name="Carninci P."/>
            <person name="Kasukawa T."/>
            <person name="Katayama S."/>
            <person name="Gough J."/>
            <person name="Frith M.C."/>
            <person name="Maeda N."/>
            <person name="Oyama R."/>
            <person name="Ravasi T."/>
            <person name="Lenhard B."/>
            <person name="Wells C."/>
            <person name="Kodzius R."/>
            <person name="Shimokawa K."/>
            <person name="Bajic V.B."/>
            <person name="Brenner S.E."/>
            <person name="Batalov S."/>
            <person name="Forrest A.R."/>
            <person name="Zavolan M."/>
            <person name="Davis M.J."/>
            <person name="Wilming L.G."/>
            <person name="Aidinis V."/>
            <person name="Allen J.E."/>
            <person name="Ambesi-Impiombato A."/>
            <person name="Apweiler R."/>
            <person name="Aturaliya R.N."/>
            <person name="Bailey T.L."/>
            <person name="Bansal M."/>
            <person name="Baxter L."/>
            <person name="Beisel K.W."/>
            <person name="Bersano T."/>
            <person name="Bono H."/>
            <person name="Chalk A.M."/>
            <person name="Chiu K.P."/>
            <person name="Choudhary V."/>
            <person name="Christoffels A."/>
            <person name="Clutterbuck D.R."/>
            <person name="Crowe M.L."/>
            <person name="Dalla E."/>
            <person name="Dalrymple B.P."/>
            <person name="de Bono B."/>
            <person name="Della Gatta G."/>
            <person name="di Bernardo D."/>
            <person name="Down T."/>
            <person name="Engstrom P."/>
            <person name="Fagiolini M."/>
            <person name="Faulkner G."/>
            <person name="Fletcher C.F."/>
            <person name="Fukushima T."/>
            <person name="Furuno M."/>
            <person name="Futaki S."/>
            <person name="Gariboldi M."/>
            <person name="Georgii-Hemming P."/>
            <person name="Gingeras T.R."/>
            <person name="Gojobori T."/>
            <person name="Green R.E."/>
            <person name="Gustincich S."/>
            <person name="Harbers M."/>
            <person name="Hayashi Y."/>
            <person name="Hensch T.K."/>
            <person name="Hirokawa N."/>
            <person name="Hill D."/>
            <person name="Huminiecki L."/>
            <person name="Iacono M."/>
            <person name="Ikeo K."/>
            <person name="Iwama A."/>
            <person name="Ishikawa T."/>
            <person name="Jakt M."/>
            <person name="Kanapin A."/>
            <person name="Katoh M."/>
            <person name="Kawasawa Y."/>
            <person name="Kelso J."/>
            <person name="Kitamura H."/>
            <person name="Kitano H."/>
            <person name="Kollias G."/>
            <person name="Krishnan S.P."/>
            <person name="Kruger A."/>
            <person name="Kummerfeld S.K."/>
            <person name="Kurochkin I.V."/>
            <person name="Lareau L.F."/>
            <person name="Lazarevic D."/>
            <person name="Lipovich L."/>
            <person name="Liu J."/>
            <person name="Liuni S."/>
            <person name="McWilliam S."/>
            <person name="Madan Babu M."/>
            <person name="Madera M."/>
            <person name="Marchionni L."/>
            <person name="Matsuda H."/>
            <person name="Matsuzawa S."/>
            <person name="Miki H."/>
            <person name="Mignone F."/>
            <person name="Miyake S."/>
            <person name="Morris K."/>
            <person name="Mottagui-Tabar S."/>
            <person name="Mulder N."/>
            <person name="Nakano N."/>
            <person name="Nakauchi H."/>
            <person name="Ng P."/>
            <person name="Nilsson R."/>
            <person name="Nishiguchi S."/>
            <person name="Nishikawa S."/>
            <person name="Nori F."/>
            <person name="Ohara O."/>
            <person name="Okazaki Y."/>
            <person name="Orlando V."/>
            <person name="Pang K.C."/>
            <person name="Pavan W.J."/>
            <person name="Pavesi G."/>
            <person name="Pesole G."/>
            <person name="Petrovsky N."/>
            <person name="Piazza S."/>
            <person name="Reed J."/>
            <person name="Reid J.F."/>
            <person name="Ring B.Z."/>
            <person name="Ringwald M."/>
            <person name="Rost B."/>
            <person name="Ruan Y."/>
            <person name="Salzberg S.L."/>
            <person name="Sandelin A."/>
            <person name="Schneider C."/>
            <person name="Schoenbach C."/>
            <person name="Sekiguchi K."/>
            <person name="Semple C.A."/>
            <person name="Seno S."/>
            <person name="Sessa L."/>
            <person name="Sheng Y."/>
            <person name="Shibata Y."/>
            <person name="Shimada H."/>
            <person name="Shimada K."/>
            <person name="Silva D."/>
            <person name="Sinclair B."/>
            <person name="Sperling S."/>
            <person name="Stupka E."/>
            <person name="Sugiura K."/>
            <person name="Sultana R."/>
            <person name="Takenaka Y."/>
            <person name="Taki K."/>
            <person name="Tammoja K."/>
            <person name="Tan S.L."/>
            <person name="Tang S."/>
            <person name="Taylor M.S."/>
            <person name="Tegner J."/>
            <person name="Teichmann S.A."/>
            <person name="Ueda H.R."/>
            <person name="van Nimwegen E."/>
            <person name="Verardo R."/>
            <person name="Wei C.L."/>
            <person name="Yagi K."/>
            <person name="Yamanishi H."/>
            <person name="Zabarovsky E."/>
            <person name="Zhu S."/>
            <person name="Zimmer A."/>
            <person name="Hide W."/>
            <person name="Bult C."/>
            <person name="Grimmond S.M."/>
            <person name="Teasdale R.D."/>
            <person name="Liu E.T."/>
            <person name="Brusic V."/>
            <person name="Quackenbush J."/>
            <person name="Wahlestedt C."/>
            <person name="Mattick J.S."/>
            <person name="Hume D.A."/>
            <person name="Kai C."/>
            <person name="Sasaki D."/>
            <person name="Tomaru Y."/>
            <person name="Fukuda S."/>
            <person name="Kanamori-Katayama M."/>
            <person name="Suzuki M."/>
            <person name="Aoki J."/>
            <person name="Arakawa T."/>
            <person name="Iida J."/>
            <person name="Imamura K."/>
            <person name="Itoh M."/>
            <person name="Kato T."/>
            <person name="Kawaji H."/>
            <person name="Kawagashira N."/>
            <person name="Kawashima T."/>
            <person name="Kojima M."/>
            <person name="Kondo S."/>
            <person name="Konno H."/>
            <person name="Nakano K."/>
            <person name="Ninomiya N."/>
            <person name="Nishio T."/>
            <person name="Okada M."/>
            <person name="Plessy C."/>
            <person name="Shibata K."/>
            <person name="Shiraki T."/>
            <person name="Suzuki S."/>
            <person name="Tagami M."/>
            <person name="Waki K."/>
            <person name="Watahiki A."/>
            <person name="Okamura-Oho Y."/>
            <person name="Suzuki H."/>
            <person name="Kawai J."/>
            <person name="Hayashizaki Y."/>
        </authorList>
    </citation>
    <scope>NUCLEOTIDE SEQUENCE [LARGE SCALE MRNA] (ISOFORMS 1; 2 AND 3)</scope>
    <source>
        <strain>C57BL/6J</strain>
        <tissue>Head</tissue>
        <tissue>Heart</tissue>
        <tissue>Kidney</tissue>
        <tissue>Pancreas</tissue>
    </source>
</reference>
<reference key="2">
    <citation type="journal article" date="2004" name="DNA Res.">
        <title>Prediction of the coding sequences of mouse homologues of KIAA gene: IV. The complete nucleotide sequences of 500 mouse KIAA-homologous cDNAs identified by screening of terminal sequences of cDNA clones randomly sampled from size-fractionated libraries.</title>
        <authorList>
            <person name="Okazaki N."/>
            <person name="Kikuno R."/>
            <person name="Ohara R."/>
            <person name="Inamoto S."/>
            <person name="Koseki H."/>
            <person name="Hiraoka S."/>
            <person name="Saga Y."/>
            <person name="Seino S."/>
            <person name="Nishimura M."/>
            <person name="Kaisho T."/>
            <person name="Hoshino K."/>
            <person name="Kitamura H."/>
            <person name="Nagase T."/>
            <person name="Ohara O."/>
            <person name="Koga H."/>
        </authorList>
    </citation>
    <scope>NUCLEOTIDE SEQUENCE [LARGE SCALE MRNA] (ISOFORM 1)</scope>
    <source>
        <tissue>Fetal brain</tissue>
    </source>
</reference>
<reference key="3">
    <citation type="journal article" date="2004" name="Genome Res.">
        <title>The status, quality, and expansion of the NIH full-length cDNA project: the Mammalian Gene Collection (MGC).</title>
        <authorList>
            <consortium name="The MGC Project Team"/>
        </authorList>
    </citation>
    <scope>NUCLEOTIDE SEQUENCE [LARGE SCALE MRNA] (ISOFORM 1)</scope>
    <source>
        <strain>FVB/N</strain>
        <tissue>Mammary tumor</tissue>
    </source>
</reference>
<reference key="4">
    <citation type="submission" date="2009-01" db="UniProtKB">
        <authorList>
            <person name="Lubec G."/>
            <person name="Sunyer B."/>
            <person name="Chen W.-Q."/>
        </authorList>
    </citation>
    <scope>PROTEIN SEQUENCE OF 2-9</scope>
    <scope>IDENTIFICATION BY MASS SPECTROMETRY</scope>
    <source>
        <strain>OF1</strain>
        <tissue>Hippocampus</tissue>
    </source>
</reference>
<reference key="5">
    <citation type="journal article" date="2010" name="Cell">
        <title>A tissue-specific atlas of mouse protein phosphorylation and expression.</title>
        <authorList>
            <person name="Huttlin E.L."/>
            <person name="Jedrychowski M.P."/>
            <person name="Elias J.E."/>
            <person name="Goswami T."/>
            <person name="Rad R."/>
            <person name="Beausoleil S.A."/>
            <person name="Villen J."/>
            <person name="Haas W."/>
            <person name="Sowa M.E."/>
            <person name="Gygi S.P."/>
        </authorList>
    </citation>
    <scope>IDENTIFICATION BY MASS SPECTROMETRY [LARGE SCALE ANALYSIS]</scope>
    <source>
        <tissue>Brain</tissue>
        <tissue>Kidney</tissue>
        <tissue>Liver</tissue>
        <tissue>Lung</tissue>
        <tissue>Pancreas</tissue>
        <tissue>Spleen</tissue>
        <tissue>Testis</tissue>
    </source>
</reference>
<reference key="6">
    <citation type="journal article" date="2016" name="J. Transl. Med.">
        <title>Immunogenic FEAT protein circulates in the bloodstream of cancer patients.</title>
        <authorList>
            <person name="Li Y."/>
            <person name="Kobayashi K."/>
            <person name="Mona M.M."/>
            <person name="Satomi C."/>
            <person name="Okano S."/>
            <person name="Inoue H."/>
            <person name="Tani K."/>
            <person name="Takahashi A."/>
        </authorList>
    </citation>
    <scope>SUBCELLULAR LOCATION</scope>
</reference>
<reference key="7">
    <citation type="journal article" date="2018" name="J. Clin. Invest.">
        <title>Modifier variant of METTL13 suppresses human GAB1-associated profound deafness.</title>
        <authorList>
            <person name="Yousaf R."/>
            <person name="Ahmed Z.M."/>
            <person name="Giese A.P."/>
            <person name="Morell R.J."/>
            <person name="Lagziel A."/>
            <person name="Dabdoub A."/>
            <person name="Wilcox E.R."/>
            <person name="Riazuddin S."/>
            <person name="Friedman T.B."/>
            <person name="Riazuddin S."/>
        </authorList>
    </citation>
    <scope>TISSUE SPECIFICITY</scope>
</reference>
<organism>
    <name type="scientific">Mus musculus</name>
    <name type="common">Mouse</name>
    <dbReference type="NCBI Taxonomy" id="10090"/>
    <lineage>
        <taxon>Eukaryota</taxon>
        <taxon>Metazoa</taxon>
        <taxon>Chordata</taxon>
        <taxon>Craniata</taxon>
        <taxon>Vertebrata</taxon>
        <taxon>Euteleostomi</taxon>
        <taxon>Mammalia</taxon>
        <taxon>Eutheria</taxon>
        <taxon>Euarchontoglires</taxon>
        <taxon>Glires</taxon>
        <taxon>Rodentia</taxon>
        <taxon>Myomorpha</taxon>
        <taxon>Muroidea</taxon>
        <taxon>Muridae</taxon>
        <taxon>Murinae</taxon>
        <taxon>Mus</taxon>
        <taxon>Mus</taxon>
    </lineage>
</organism>
<feature type="chain" id="PRO_0000050780" description="eEF1A lysine and N-terminal methyltransferase">
    <location>
        <begin position="1"/>
        <end position="698"/>
    </location>
</feature>
<feature type="region of interest" description="Disordered" evidence="2">
    <location>
        <begin position="431"/>
        <end position="461"/>
    </location>
</feature>
<feature type="compositionally biased region" description="Basic residues" evidence="2">
    <location>
        <begin position="436"/>
        <end position="448"/>
    </location>
</feature>
<feature type="modified residue" description="N-acetylmethionine" evidence="1">
    <location>
        <position position="1"/>
    </location>
</feature>
<feature type="modified residue" description="Phosphoserine" evidence="1">
    <location>
        <position position="267"/>
    </location>
</feature>
<feature type="splice variant" id="VSP_013923" description="In isoform 3." evidence="5">
    <original>IPQGRETEWLFGME</original>
    <variation>SELGLLRLSLEGLS</variation>
    <location>
        <begin position="305"/>
        <end position="318"/>
    </location>
</feature>
<feature type="splice variant" id="VSP_013924" description="In isoform 3." evidence="5">
    <location>
        <begin position="319"/>
        <end position="698"/>
    </location>
</feature>
<feature type="splice variant" id="VSP_013925" description="In isoform 2." evidence="5">
    <original>FLSV</original>
    <variation>NSDL</variation>
    <location>
        <begin position="374"/>
        <end position="377"/>
    </location>
</feature>
<feature type="splice variant" id="VSP_013926" description="In isoform 2." evidence="5">
    <location>
        <begin position="378"/>
        <end position="698"/>
    </location>
</feature>
<feature type="sequence conflict" description="In Ref. 1; BAE41074." evidence="8" ref="1">
    <original>T</original>
    <variation>A</variation>
    <location>
        <position position="453"/>
    </location>
</feature>
<protein>
    <recommendedName>
        <fullName evidence="9">eEF1A lysine and N-terminal methyltransferase</fullName>
        <shortName evidence="1">eEF1A-KNMT</shortName>
    </recommendedName>
    <alternativeName>
        <fullName evidence="1">Methyltransferase-like protein 13</fullName>
    </alternativeName>
    <domain>
        <recommendedName>
            <fullName evidence="1">eEF1A lysine methyltransferase</fullName>
            <ecNumber evidence="1">2.1.1.-</ecNumber>
        </recommendedName>
    </domain>
    <domain>
        <recommendedName>
            <fullName evidence="1">eEF1A N-terminal methyltransferase</fullName>
            <ecNumber evidence="1">2.1.1.-</ecNumber>
        </recommendedName>
    </domain>
</protein>
<name>EFNMT_MOUSE</name>
<comment type="function">
    <text evidence="1">Dual methyltransferase that catalyzes methylation of elongation factor 1-alpha (EEF1A1 and EEF1A2) at two different positions, and is therefore involved in the regulation of mRNA translation (By similarity). Via its C-terminus, methylates EEF1A1 and EEF1A2 at the N-terminal residue 'Gly-2' (By similarity). Via its N-terminus dimethylates EEF1A1 and EEF1A2 at residue 'Lys-55' (By similarity). Has no activity towards core histones H2A, H2B, H3 and H4 (By similarity).</text>
</comment>
<comment type="catalytic activity">
    <reaction evidence="1">
        <text>L-lysyl-[protein] + S-adenosyl-L-methionine = N(6)-methyl-L-lysyl-[protein] + S-adenosyl-L-homocysteine + H(+)</text>
        <dbReference type="Rhea" id="RHEA:51736"/>
        <dbReference type="Rhea" id="RHEA-COMP:9752"/>
        <dbReference type="Rhea" id="RHEA-COMP:13053"/>
        <dbReference type="ChEBI" id="CHEBI:15378"/>
        <dbReference type="ChEBI" id="CHEBI:29969"/>
        <dbReference type="ChEBI" id="CHEBI:57856"/>
        <dbReference type="ChEBI" id="CHEBI:59789"/>
        <dbReference type="ChEBI" id="CHEBI:61929"/>
    </reaction>
</comment>
<comment type="catalytic activity">
    <reaction evidence="1">
        <text>N(6)-methyl-L-lysyl-[protein] + S-adenosyl-L-methionine = N(6),N(6)-dimethyl-L-lysyl-[protein] + S-adenosyl-L-homocysteine + H(+)</text>
        <dbReference type="Rhea" id="RHEA:54196"/>
        <dbReference type="Rhea" id="RHEA-COMP:13053"/>
        <dbReference type="Rhea" id="RHEA-COMP:13827"/>
        <dbReference type="ChEBI" id="CHEBI:15378"/>
        <dbReference type="ChEBI" id="CHEBI:57856"/>
        <dbReference type="ChEBI" id="CHEBI:59789"/>
        <dbReference type="ChEBI" id="CHEBI:61929"/>
        <dbReference type="ChEBI" id="CHEBI:61976"/>
    </reaction>
</comment>
<comment type="catalytic activity">
    <reaction evidence="1">
        <text>N-terminal glycyl-L-lysyl-L-glutamyl-[protein] + 3 S-adenosyl-L-methionine = N-terminal N,N,N-trimethyl-glycyl-L-lysyl-L-glutamyl-[protein] + 3 S-adenosyl-L-homocysteine + 3 H(+)</text>
        <dbReference type="Rhea" id="RHEA:58440"/>
        <dbReference type="Rhea" id="RHEA-COMP:15140"/>
        <dbReference type="Rhea" id="RHEA-COMP:15143"/>
        <dbReference type="ChEBI" id="CHEBI:15378"/>
        <dbReference type="ChEBI" id="CHEBI:57856"/>
        <dbReference type="ChEBI" id="CHEBI:59789"/>
        <dbReference type="ChEBI" id="CHEBI:142597"/>
        <dbReference type="ChEBI" id="CHEBI:142600"/>
    </reaction>
</comment>
<comment type="subunit">
    <text evidence="1">Forms a tripartite complex containing GAB1, METTL13 and SPRY2 (By similarity). Within the complex interacts with GAB1 and SPRY2 (By similarity).</text>
</comment>
<comment type="subcellular location">
    <subcellularLocation>
        <location evidence="3">Cytoplasm</location>
    </subcellularLocation>
    <subcellularLocation>
        <location evidence="3">Nucleus</location>
    </subcellularLocation>
    <subcellularLocation>
        <location evidence="3">Mitochondrion</location>
    </subcellularLocation>
</comment>
<comment type="alternative products">
    <event type="alternative splicing"/>
    <isoform>
        <id>Q91YR5-3</id>
        <name>1</name>
        <sequence type="displayed"/>
    </isoform>
    <isoform>
        <id>Q91YR5-1</id>
        <name>2</name>
        <sequence type="described" ref="VSP_013925 VSP_013926"/>
    </isoform>
    <isoform>
        <id>Q91YR5-2</id>
        <name>3</name>
        <sequence type="described" ref="VSP_013923 VSP_013924"/>
    </isoform>
</comment>
<comment type="tissue specificity">
    <text evidence="4">Expressed in the inner ear (at protein level) (PubMed:29408807). Expression is detected in the cochlear duct, spiral limbus region, efferent and afferent nerves, and in spiral ganglion neurons (at protein level) (PubMed:29408807).</text>
</comment>
<comment type="similarity">
    <text evidence="8">Belongs to the methyltransferase superfamily.</text>
</comment>
<comment type="sequence caution" evidence="8">
    <conflict type="erroneous initiation">
        <sequence resource="EMBL-CDS" id="BAD32322"/>
    </conflict>
</comment>
<keyword id="KW-0007">Acetylation</keyword>
<keyword id="KW-0025">Alternative splicing</keyword>
<keyword id="KW-0963">Cytoplasm</keyword>
<keyword id="KW-0903">Direct protein sequencing</keyword>
<keyword id="KW-0489">Methyltransferase</keyword>
<keyword id="KW-0496">Mitochondrion</keyword>
<keyword id="KW-0511">Multifunctional enzyme</keyword>
<keyword id="KW-0539">Nucleus</keyword>
<keyword id="KW-0597">Phosphoprotein</keyword>
<keyword id="KW-1185">Reference proteome</keyword>
<keyword id="KW-0808">Transferase</keyword>
<accession>Q91YR5</accession>
<accession>Q3TF24</accession>
<accession>Q3TFY3</accession>
<accession>Q69ZX4</accession>
<accession>Q8BWN2</accession>
<accession>Q8BX81</accession>
<dbReference type="EC" id="2.1.1.-" evidence="1"/>
<dbReference type="EMBL" id="AK048636">
    <property type="protein sequence ID" value="BAC33403.1"/>
    <property type="molecule type" value="mRNA"/>
</dbReference>
<dbReference type="EMBL" id="AK050492">
    <property type="protein sequence ID" value="BAC34288.1"/>
    <property type="molecule type" value="mRNA"/>
</dbReference>
<dbReference type="EMBL" id="AK146751">
    <property type="protein sequence ID" value="BAE27408.1"/>
    <property type="molecule type" value="mRNA"/>
</dbReference>
<dbReference type="EMBL" id="AK168959">
    <property type="protein sequence ID" value="BAE40765.1"/>
    <property type="molecule type" value="mRNA"/>
</dbReference>
<dbReference type="EMBL" id="AK169319">
    <property type="protein sequence ID" value="BAE41074.1"/>
    <property type="molecule type" value="mRNA"/>
</dbReference>
<dbReference type="EMBL" id="AK173044">
    <property type="protein sequence ID" value="BAD32322.1"/>
    <property type="status" value="ALT_INIT"/>
    <property type="molecule type" value="mRNA"/>
</dbReference>
<dbReference type="EMBL" id="BC014872">
    <property type="protein sequence ID" value="AAH14872.1"/>
    <property type="molecule type" value="mRNA"/>
</dbReference>
<dbReference type="CCDS" id="CCDS15420.1">
    <molecule id="Q91YR5-3"/>
</dbReference>
<dbReference type="RefSeq" id="NP_659126.1">
    <molecule id="Q91YR5-3"/>
    <property type="nucleotide sequence ID" value="NM_144877.2"/>
</dbReference>
<dbReference type="SMR" id="Q91YR5"/>
<dbReference type="BioGRID" id="214715">
    <property type="interactions" value="2"/>
</dbReference>
<dbReference type="FunCoup" id="Q91YR5">
    <property type="interactions" value="5233"/>
</dbReference>
<dbReference type="STRING" id="10090.ENSMUSP00000028017"/>
<dbReference type="iPTMnet" id="Q91YR5"/>
<dbReference type="PhosphoSitePlus" id="Q91YR5"/>
<dbReference type="SwissPalm" id="Q91YR5"/>
<dbReference type="PaxDb" id="10090-ENSMUSP00000028017"/>
<dbReference type="PeptideAtlas" id="Q91YR5"/>
<dbReference type="ProteomicsDB" id="295933">
    <molecule id="Q91YR5-3"/>
</dbReference>
<dbReference type="ProteomicsDB" id="295934">
    <molecule id="Q91YR5-1"/>
</dbReference>
<dbReference type="ProteomicsDB" id="295935">
    <molecule id="Q91YR5-2"/>
</dbReference>
<dbReference type="Pumba" id="Q91YR5"/>
<dbReference type="Antibodypedia" id="20555">
    <property type="antibodies" value="80 antibodies from 18 providers"/>
</dbReference>
<dbReference type="DNASU" id="71449"/>
<dbReference type="Ensembl" id="ENSMUST00000028017.16">
    <molecule id="Q91YR5-3"/>
    <property type="protein sequence ID" value="ENSMUSP00000028017.9"/>
    <property type="gene ID" value="ENSMUSG00000026694.20"/>
</dbReference>
<dbReference type="GeneID" id="71449"/>
<dbReference type="KEGG" id="mmu:71449"/>
<dbReference type="UCSC" id="uc007dgh.1">
    <molecule id="Q91YR5-3"/>
    <property type="organism name" value="mouse"/>
</dbReference>
<dbReference type="UCSC" id="uc007dgi.1">
    <molecule id="Q91YR5-1"/>
    <property type="organism name" value="mouse"/>
</dbReference>
<dbReference type="UCSC" id="uc007dgj.1">
    <molecule id="Q91YR5-2"/>
    <property type="organism name" value="mouse"/>
</dbReference>
<dbReference type="AGR" id="MGI:1918699"/>
<dbReference type="CTD" id="51603"/>
<dbReference type="MGI" id="MGI:1918699">
    <property type="gene designation" value="Mettl13"/>
</dbReference>
<dbReference type="VEuPathDB" id="HostDB:ENSMUSG00000026694"/>
<dbReference type="eggNOG" id="KOG2352">
    <property type="taxonomic scope" value="Eukaryota"/>
</dbReference>
<dbReference type="GeneTree" id="ENSGT00510000047399"/>
<dbReference type="HOGENOM" id="CLU_010025_1_0_1"/>
<dbReference type="InParanoid" id="Q91YR5"/>
<dbReference type="OMA" id="FEWYGAF"/>
<dbReference type="OrthoDB" id="411785at2759"/>
<dbReference type="PhylomeDB" id="Q91YR5"/>
<dbReference type="TreeFam" id="TF105906"/>
<dbReference type="BioGRID-ORCS" id="71449">
    <property type="hits" value="3 hits in 76 CRISPR screens"/>
</dbReference>
<dbReference type="ChiTaRS" id="Eef1aknmt">
    <property type="organism name" value="mouse"/>
</dbReference>
<dbReference type="PRO" id="PR:Q91YR5"/>
<dbReference type="Proteomes" id="UP000000589">
    <property type="component" value="Chromosome 1"/>
</dbReference>
<dbReference type="RNAct" id="Q91YR5">
    <property type="molecule type" value="protein"/>
</dbReference>
<dbReference type="Bgee" id="ENSMUSG00000026694">
    <property type="expression patterns" value="Expressed in lumbar dorsal root ganglion and 214 other cell types or tissues"/>
</dbReference>
<dbReference type="ExpressionAtlas" id="Q91YR5">
    <property type="expression patterns" value="baseline and differential"/>
</dbReference>
<dbReference type="GO" id="GO:0005737">
    <property type="term" value="C:cytoplasm"/>
    <property type="evidence" value="ECO:0000314"/>
    <property type="project" value="UniProtKB"/>
</dbReference>
<dbReference type="GO" id="GO:0005829">
    <property type="term" value="C:cytosol"/>
    <property type="evidence" value="ECO:0007669"/>
    <property type="project" value="Ensembl"/>
</dbReference>
<dbReference type="GO" id="GO:0005739">
    <property type="term" value="C:mitochondrion"/>
    <property type="evidence" value="ECO:0000314"/>
    <property type="project" value="UniProtKB"/>
</dbReference>
<dbReference type="GO" id="GO:0005634">
    <property type="term" value="C:nucleus"/>
    <property type="evidence" value="ECO:0000314"/>
    <property type="project" value="UniProtKB"/>
</dbReference>
<dbReference type="GO" id="GO:0016279">
    <property type="term" value="F:protein-lysine N-methyltransferase activity"/>
    <property type="evidence" value="ECO:0007669"/>
    <property type="project" value="Ensembl"/>
</dbReference>
<dbReference type="GO" id="GO:0032259">
    <property type="term" value="P:methylation"/>
    <property type="evidence" value="ECO:0007669"/>
    <property type="project" value="UniProtKB-KW"/>
</dbReference>
<dbReference type="CDD" id="cd02440">
    <property type="entry name" value="AdoMet_MTases"/>
    <property type="match status" value="2"/>
</dbReference>
<dbReference type="FunFam" id="3.40.50.150:FF:000110">
    <property type="entry name" value="methyltransferase-like protein 13 isoform X1"/>
    <property type="match status" value="1"/>
</dbReference>
<dbReference type="FunFam" id="3.40.50.150:FF:000150">
    <property type="entry name" value="methyltransferase-like protein 13 isoform X1"/>
    <property type="match status" value="1"/>
</dbReference>
<dbReference type="Gene3D" id="3.40.50.150">
    <property type="entry name" value="Vaccinia Virus protein VP39"/>
    <property type="match status" value="2"/>
</dbReference>
<dbReference type="InterPro" id="IPR051419">
    <property type="entry name" value="Lys/N-term_MeTrsfase_sf"/>
</dbReference>
<dbReference type="InterPro" id="IPR041698">
    <property type="entry name" value="Methyltransf_25"/>
</dbReference>
<dbReference type="InterPro" id="IPR029063">
    <property type="entry name" value="SAM-dependent_MTases_sf"/>
</dbReference>
<dbReference type="NCBIfam" id="NF037959">
    <property type="entry name" value="MFS_SpdSyn"/>
    <property type="match status" value="1"/>
</dbReference>
<dbReference type="PANTHER" id="PTHR12176">
    <property type="entry name" value="SAM-DEPENDENT METHYLTRANSFERASE SUPERFAMILY PROTEIN"/>
    <property type="match status" value="1"/>
</dbReference>
<dbReference type="Pfam" id="PF13649">
    <property type="entry name" value="Methyltransf_25"/>
    <property type="match status" value="1"/>
</dbReference>
<dbReference type="Pfam" id="PF01564">
    <property type="entry name" value="Spermine_synth"/>
    <property type="match status" value="1"/>
</dbReference>
<dbReference type="SUPFAM" id="SSF53335">
    <property type="entry name" value="S-adenosyl-L-methionine-dependent methyltransferases"/>
    <property type="match status" value="2"/>
</dbReference>
<sequence>MNLLPKSSKEFGSADYWEKFFQQRGKTAFEWYGTYLELCEVLHKYIKPKEKVLVIGCGNSELSEQLYDVGYQDIVNIDISEVVIKQMKERNGSRRPHMSFLKMDMTQLEFPDATFQVVLDKGTLDAVLTDEEEVTLRQVDRMLAEVGRVLQVGGRYLCISLAQAHILKKAVGHFSREGWMVRAHQVASSQDRVSEAEPRFSLPVFAFVMTKFRPVPGSALQIFELCTQEQGKPVRLESADQLAEAVRERQYYAWLCSQLRRKAGLGSVSLDLCSGDTGEPRYTLHVVDNPAVKPSRDNHFAIFIIPQGRETEWLFGMEEGRKQLAASAGFRRLVTVALHRGQRYAGMESIQAELSARVMELAPAGLPPQQQVPFLSVGGDIGVRTVQHQDHSALSGDYVIEDVQGEDRWYFRRLIFLSNRNVVQSEARLLKDTSHRAQKKRKKDRKKQRPADTSEDFPPAPGQSIDKSYLCCEHHKAMVAGLALLRNPELLLETPLTLLVVGLGGGSLPLFVHDHFPKSRIDAVEIDPTMLEVATQWFGFSQSDRMKVHIADGLDYITSLAGEAPPHYDVIMFDVDSKDPTLGMSCPPPAFVDQVFLQKVKSILCHDGVFILNLVCRDVRLKDSVLAGLKAAFPLLYVRRIEGEVNEILFCQLHPEQKLATPELLEMAQVLERTLRKPGQGWDDTYVLSDMLKTVKIV</sequence>
<gene>
    <name evidence="7" type="primary">Mettl13</name>
    <name evidence="9" type="synonym">EEF1AKNMT</name>
    <name evidence="6" type="synonym">FEAT</name>
</gene>
<evidence type="ECO:0000250" key="1">
    <source>
        <dbReference type="UniProtKB" id="Q8N6R0"/>
    </source>
</evidence>
<evidence type="ECO:0000256" key="2">
    <source>
        <dbReference type="SAM" id="MobiDB-lite"/>
    </source>
</evidence>
<evidence type="ECO:0000269" key="3">
    <source>
    </source>
</evidence>
<evidence type="ECO:0000269" key="4">
    <source>
    </source>
</evidence>
<evidence type="ECO:0000303" key="5">
    <source>
    </source>
</evidence>
<evidence type="ECO:0000303" key="6">
    <source>
    </source>
</evidence>
<evidence type="ECO:0000303" key="7">
    <source>
    </source>
</evidence>
<evidence type="ECO:0000305" key="8"/>
<evidence type="ECO:0000312" key="9">
    <source>
        <dbReference type="MGI" id="MGI:1918699"/>
    </source>
</evidence>
<proteinExistence type="evidence at protein level"/>